<comment type="caution">
    <text evidence="2">Product of a dubious CDS prediction. May be a target of NMD. Not on genome assembly (GRCh37/hg19).</text>
</comment>
<protein>
    <recommendedName>
        <fullName>Putative uncharacterized protein FLJ45825</fullName>
    </recommendedName>
</protein>
<organism>
    <name type="scientific">Homo sapiens</name>
    <name type="common">Human</name>
    <dbReference type="NCBI Taxonomy" id="9606"/>
    <lineage>
        <taxon>Eukaryota</taxon>
        <taxon>Metazoa</taxon>
        <taxon>Chordata</taxon>
        <taxon>Craniata</taxon>
        <taxon>Vertebrata</taxon>
        <taxon>Euteleostomi</taxon>
        <taxon>Mammalia</taxon>
        <taxon>Eutheria</taxon>
        <taxon>Euarchontoglires</taxon>
        <taxon>Primates</taxon>
        <taxon>Haplorrhini</taxon>
        <taxon>Catarrhini</taxon>
        <taxon>Hominidae</taxon>
        <taxon>Homo</taxon>
    </lineage>
</organism>
<accession>Q6ZS52</accession>
<feature type="chain" id="PRO_0000337011" description="Putative uncharacterized protein FLJ45825">
    <location>
        <begin position="1"/>
        <end position="159"/>
    </location>
</feature>
<feature type="region of interest" description="Disordered" evidence="1">
    <location>
        <begin position="1"/>
        <end position="29"/>
    </location>
</feature>
<feature type="region of interest" description="Disordered" evidence="1">
    <location>
        <begin position="114"/>
        <end position="159"/>
    </location>
</feature>
<feature type="compositionally biased region" description="Polar residues" evidence="1">
    <location>
        <begin position="15"/>
        <end position="29"/>
    </location>
</feature>
<reference key="1">
    <citation type="journal article" date="2003" name="Nature">
        <title>The DNA sequence and analysis of human chromosome 6.</title>
        <authorList>
            <person name="Mungall A.J."/>
            <person name="Palmer S.A."/>
            <person name="Sims S.K."/>
            <person name="Edwards C.A."/>
            <person name="Ashurst J.L."/>
            <person name="Wilming L."/>
            <person name="Jones M.C."/>
            <person name="Horton R."/>
            <person name="Hunt S.E."/>
            <person name="Scott C.E."/>
            <person name="Gilbert J.G.R."/>
            <person name="Clamp M.E."/>
            <person name="Bethel G."/>
            <person name="Milne S."/>
            <person name="Ainscough R."/>
            <person name="Almeida J.P."/>
            <person name="Ambrose K.D."/>
            <person name="Andrews T.D."/>
            <person name="Ashwell R.I.S."/>
            <person name="Babbage A.K."/>
            <person name="Bagguley C.L."/>
            <person name="Bailey J."/>
            <person name="Banerjee R."/>
            <person name="Barker D.J."/>
            <person name="Barlow K.F."/>
            <person name="Bates K."/>
            <person name="Beare D.M."/>
            <person name="Beasley H."/>
            <person name="Beasley O."/>
            <person name="Bird C.P."/>
            <person name="Blakey S.E."/>
            <person name="Bray-Allen S."/>
            <person name="Brook J."/>
            <person name="Brown A.J."/>
            <person name="Brown J.Y."/>
            <person name="Burford D.C."/>
            <person name="Burrill W."/>
            <person name="Burton J."/>
            <person name="Carder C."/>
            <person name="Carter N.P."/>
            <person name="Chapman J.C."/>
            <person name="Clark S.Y."/>
            <person name="Clark G."/>
            <person name="Clee C.M."/>
            <person name="Clegg S."/>
            <person name="Cobley V."/>
            <person name="Collier R.E."/>
            <person name="Collins J.E."/>
            <person name="Colman L.K."/>
            <person name="Corby N.R."/>
            <person name="Coville G.J."/>
            <person name="Culley K.M."/>
            <person name="Dhami P."/>
            <person name="Davies J."/>
            <person name="Dunn M."/>
            <person name="Earthrowl M.E."/>
            <person name="Ellington A.E."/>
            <person name="Evans K.A."/>
            <person name="Faulkner L."/>
            <person name="Francis M.D."/>
            <person name="Frankish A."/>
            <person name="Frankland J."/>
            <person name="French L."/>
            <person name="Garner P."/>
            <person name="Garnett J."/>
            <person name="Ghori M.J."/>
            <person name="Gilby L.M."/>
            <person name="Gillson C.J."/>
            <person name="Glithero R.J."/>
            <person name="Grafham D.V."/>
            <person name="Grant M."/>
            <person name="Gribble S."/>
            <person name="Griffiths C."/>
            <person name="Griffiths M.N.D."/>
            <person name="Hall R."/>
            <person name="Halls K.S."/>
            <person name="Hammond S."/>
            <person name="Harley J.L."/>
            <person name="Hart E.A."/>
            <person name="Heath P.D."/>
            <person name="Heathcott R."/>
            <person name="Holmes S.J."/>
            <person name="Howden P.J."/>
            <person name="Howe K.L."/>
            <person name="Howell G.R."/>
            <person name="Huckle E."/>
            <person name="Humphray S.J."/>
            <person name="Humphries M.D."/>
            <person name="Hunt A.R."/>
            <person name="Johnson C.M."/>
            <person name="Joy A.A."/>
            <person name="Kay M."/>
            <person name="Keenan S.J."/>
            <person name="Kimberley A.M."/>
            <person name="King A."/>
            <person name="Laird G.K."/>
            <person name="Langford C."/>
            <person name="Lawlor S."/>
            <person name="Leongamornlert D.A."/>
            <person name="Leversha M."/>
            <person name="Lloyd C.R."/>
            <person name="Lloyd D.M."/>
            <person name="Loveland J.E."/>
            <person name="Lovell J."/>
            <person name="Martin S."/>
            <person name="Mashreghi-Mohammadi M."/>
            <person name="Maslen G.L."/>
            <person name="Matthews L."/>
            <person name="McCann O.T."/>
            <person name="McLaren S.J."/>
            <person name="McLay K."/>
            <person name="McMurray A."/>
            <person name="Moore M.J.F."/>
            <person name="Mullikin J.C."/>
            <person name="Niblett D."/>
            <person name="Nickerson T."/>
            <person name="Novik K.L."/>
            <person name="Oliver K."/>
            <person name="Overton-Larty E.K."/>
            <person name="Parker A."/>
            <person name="Patel R."/>
            <person name="Pearce A.V."/>
            <person name="Peck A.I."/>
            <person name="Phillimore B.J.C.T."/>
            <person name="Phillips S."/>
            <person name="Plumb R.W."/>
            <person name="Porter K.M."/>
            <person name="Ramsey Y."/>
            <person name="Ranby S.A."/>
            <person name="Rice C.M."/>
            <person name="Ross M.T."/>
            <person name="Searle S.M."/>
            <person name="Sehra H.K."/>
            <person name="Sheridan E."/>
            <person name="Skuce C.D."/>
            <person name="Smith S."/>
            <person name="Smith M."/>
            <person name="Spraggon L."/>
            <person name="Squares S.L."/>
            <person name="Steward C.A."/>
            <person name="Sycamore N."/>
            <person name="Tamlyn-Hall G."/>
            <person name="Tester J."/>
            <person name="Theaker A.J."/>
            <person name="Thomas D.W."/>
            <person name="Thorpe A."/>
            <person name="Tracey A."/>
            <person name="Tromans A."/>
            <person name="Tubby B."/>
            <person name="Wall M."/>
            <person name="Wallis J.M."/>
            <person name="West A.P."/>
            <person name="White S.S."/>
            <person name="Whitehead S.L."/>
            <person name="Whittaker H."/>
            <person name="Wild A."/>
            <person name="Willey D.J."/>
            <person name="Wilmer T.E."/>
            <person name="Wood J.M."/>
            <person name="Wray P.W."/>
            <person name="Wyatt J.C."/>
            <person name="Young L."/>
            <person name="Younger R.M."/>
            <person name="Bentley D.R."/>
            <person name="Coulson A."/>
            <person name="Durbin R.M."/>
            <person name="Hubbard T."/>
            <person name="Sulston J.E."/>
            <person name="Dunham I."/>
            <person name="Rogers J."/>
            <person name="Beck S."/>
        </authorList>
    </citation>
    <scope>NUCLEOTIDE SEQUENCE [LARGE SCALE GENOMIC DNA]</scope>
</reference>
<reference key="2">
    <citation type="journal article" date="2004" name="Nat. Genet.">
        <title>Complete sequencing and characterization of 21,243 full-length human cDNAs.</title>
        <authorList>
            <person name="Ota T."/>
            <person name="Suzuki Y."/>
            <person name="Nishikawa T."/>
            <person name="Otsuki T."/>
            <person name="Sugiyama T."/>
            <person name="Irie R."/>
            <person name="Wakamatsu A."/>
            <person name="Hayashi K."/>
            <person name="Sato H."/>
            <person name="Nagai K."/>
            <person name="Kimura K."/>
            <person name="Makita H."/>
            <person name="Sekine M."/>
            <person name="Obayashi M."/>
            <person name="Nishi T."/>
            <person name="Shibahara T."/>
            <person name="Tanaka T."/>
            <person name="Ishii S."/>
            <person name="Yamamoto J."/>
            <person name="Saito K."/>
            <person name="Kawai Y."/>
            <person name="Isono Y."/>
            <person name="Nakamura Y."/>
            <person name="Nagahari K."/>
            <person name="Murakami K."/>
            <person name="Yasuda T."/>
            <person name="Iwayanagi T."/>
            <person name="Wagatsuma M."/>
            <person name="Shiratori A."/>
            <person name="Sudo H."/>
            <person name="Hosoiri T."/>
            <person name="Kaku Y."/>
            <person name="Kodaira H."/>
            <person name="Kondo H."/>
            <person name="Sugawara M."/>
            <person name="Takahashi M."/>
            <person name="Kanda K."/>
            <person name="Yokoi T."/>
            <person name="Furuya T."/>
            <person name="Kikkawa E."/>
            <person name="Omura Y."/>
            <person name="Abe K."/>
            <person name="Kamihara K."/>
            <person name="Katsuta N."/>
            <person name="Sato K."/>
            <person name="Tanikawa M."/>
            <person name="Yamazaki M."/>
            <person name="Ninomiya K."/>
            <person name="Ishibashi T."/>
            <person name="Yamashita H."/>
            <person name="Murakawa K."/>
            <person name="Fujimori K."/>
            <person name="Tanai H."/>
            <person name="Kimata M."/>
            <person name="Watanabe M."/>
            <person name="Hiraoka S."/>
            <person name="Chiba Y."/>
            <person name="Ishida S."/>
            <person name="Ono Y."/>
            <person name="Takiguchi S."/>
            <person name="Watanabe S."/>
            <person name="Yosida M."/>
            <person name="Hotuta T."/>
            <person name="Kusano J."/>
            <person name="Kanehori K."/>
            <person name="Takahashi-Fujii A."/>
            <person name="Hara H."/>
            <person name="Tanase T.-O."/>
            <person name="Nomura Y."/>
            <person name="Togiya S."/>
            <person name="Komai F."/>
            <person name="Hara R."/>
            <person name="Takeuchi K."/>
            <person name="Arita M."/>
            <person name="Imose N."/>
            <person name="Musashino K."/>
            <person name="Yuuki H."/>
            <person name="Oshima A."/>
            <person name="Sasaki N."/>
            <person name="Aotsuka S."/>
            <person name="Yoshikawa Y."/>
            <person name="Matsunawa H."/>
            <person name="Ichihara T."/>
            <person name="Shiohata N."/>
            <person name="Sano S."/>
            <person name="Moriya S."/>
            <person name="Momiyama H."/>
            <person name="Satoh N."/>
            <person name="Takami S."/>
            <person name="Terashima Y."/>
            <person name="Suzuki O."/>
            <person name="Nakagawa S."/>
            <person name="Senoh A."/>
            <person name="Mizoguchi H."/>
            <person name="Goto Y."/>
            <person name="Shimizu F."/>
            <person name="Wakebe H."/>
            <person name="Hishigaki H."/>
            <person name="Watanabe T."/>
            <person name="Sugiyama A."/>
            <person name="Takemoto M."/>
            <person name="Kawakami B."/>
            <person name="Yamazaki M."/>
            <person name="Watanabe K."/>
            <person name="Kumagai A."/>
            <person name="Itakura S."/>
            <person name="Fukuzumi Y."/>
            <person name="Fujimori Y."/>
            <person name="Komiyama M."/>
            <person name="Tashiro H."/>
            <person name="Tanigami A."/>
            <person name="Fujiwara T."/>
            <person name="Ono T."/>
            <person name="Yamada K."/>
            <person name="Fujii Y."/>
            <person name="Ozaki K."/>
            <person name="Hirao M."/>
            <person name="Ohmori Y."/>
            <person name="Kawabata A."/>
            <person name="Hikiji T."/>
            <person name="Kobatake N."/>
            <person name="Inagaki H."/>
            <person name="Ikema Y."/>
            <person name="Okamoto S."/>
            <person name="Okitani R."/>
            <person name="Kawakami T."/>
            <person name="Noguchi S."/>
            <person name="Itoh T."/>
            <person name="Shigeta K."/>
            <person name="Senba T."/>
            <person name="Matsumura K."/>
            <person name="Nakajima Y."/>
            <person name="Mizuno T."/>
            <person name="Morinaga M."/>
            <person name="Sasaki M."/>
            <person name="Togashi T."/>
            <person name="Oyama M."/>
            <person name="Hata H."/>
            <person name="Watanabe M."/>
            <person name="Komatsu T."/>
            <person name="Mizushima-Sugano J."/>
            <person name="Satoh T."/>
            <person name="Shirai Y."/>
            <person name="Takahashi Y."/>
            <person name="Nakagawa K."/>
            <person name="Okumura K."/>
            <person name="Nagase T."/>
            <person name="Nomura N."/>
            <person name="Kikuchi H."/>
            <person name="Masuho Y."/>
            <person name="Yamashita R."/>
            <person name="Nakai K."/>
            <person name="Yada T."/>
            <person name="Nakamura Y."/>
            <person name="Ohara O."/>
            <person name="Isogai T."/>
            <person name="Sugano S."/>
        </authorList>
    </citation>
    <scope>NUCLEOTIDE SEQUENCE [LARGE SCALE MRNA]</scope>
</reference>
<reference key="3">
    <citation type="submission" date="2005-07" db="EMBL/GenBank/DDBJ databases">
        <authorList>
            <person name="Mural R.J."/>
            <person name="Istrail S."/>
            <person name="Sutton G.G."/>
            <person name="Florea L."/>
            <person name="Halpern A.L."/>
            <person name="Mobarry C.M."/>
            <person name="Lippert R."/>
            <person name="Walenz B."/>
            <person name="Shatkay H."/>
            <person name="Dew I."/>
            <person name="Miller J.R."/>
            <person name="Flanigan M.J."/>
            <person name="Edwards N.J."/>
            <person name="Bolanos R."/>
            <person name="Fasulo D."/>
            <person name="Halldorsson B.V."/>
            <person name="Hannenhalli S."/>
            <person name="Turner R."/>
            <person name="Yooseph S."/>
            <person name="Lu F."/>
            <person name="Nusskern D.R."/>
            <person name="Shue B.C."/>
            <person name="Zheng X.H."/>
            <person name="Zhong F."/>
            <person name="Delcher A.L."/>
            <person name="Huson D.H."/>
            <person name="Kravitz S.A."/>
            <person name="Mouchard L."/>
            <person name="Reinert K."/>
            <person name="Remington K.A."/>
            <person name="Clark A.G."/>
            <person name="Waterman M.S."/>
            <person name="Eichler E.E."/>
            <person name="Adams M.D."/>
            <person name="Hunkapiller M.W."/>
            <person name="Myers E.W."/>
            <person name="Venter J.C."/>
        </authorList>
    </citation>
    <scope>NUCLEOTIDE SEQUENCE [LARGE SCALE GENOMIC DNA]</scope>
</reference>
<proteinExistence type="uncertain"/>
<evidence type="ECO:0000256" key="1">
    <source>
        <dbReference type="SAM" id="MobiDB-lite"/>
    </source>
</evidence>
<evidence type="ECO:0000305" key="2"/>
<dbReference type="EMBL" id="AK127725">
    <property type="protein sequence ID" value="BAC87103.1"/>
    <property type="molecule type" value="mRNA"/>
</dbReference>
<dbReference type="EMBL" id="AL353597">
    <property type="status" value="NOT_ANNOTATED_CDS"/>
    <property type="molecule type" value="Genomic_DNA"/>
</dbReference>
<dbReference type="EMBL" id="CH471081">
    <property type="protein sequence ID" value="EAX03948.1"/>
    <property type="molecule type" value="Genomic_DNA"/>
</dbReference>
<dbReference type="GlyGen" id="Q6ZS52">
    <property type="glycosylation" value="1 site"/>
</dbReference>
<dbReference type="BioMuta" id="-"/>
<dbReference type="MassIVE" id="Q6ZS52"/>
<dbReference type="AGR" id="HGNC:53511"/>
<dbReference type="neXtProt" id="NX_Q6ZS52"/>
<dbReference type="InParanoid" id="Q6ZS52"/>
<dbReference type="PAN-GO" id="Q6ZS52">
    <property type="GO annotations" value="0 GO annotations based on evolutionary models"/>
</dbReference>
<dbReference type="PhylomeDB" id="Q6ZS52"/>
<dbReference type="Pharos" id="Q6ZS52">
    <property type="development level" value="Tdark"/>
</dbReference>
<dbReference type="Proteomes" id="UP000005640">
    <property type="component" value="Unplaced"/>
</dbReference>
<dbReference type="RNAct" id="Q6ZS52">
    <property type="molecule type" value="protein"/>
</dbReference>
<name>YF013_HUMAN</name>
<sequence length="159" mass="17352">MHQTHAIQRLEVLPSFSNESPTSRETSESWTNQDDIFYAYASMSPGAEHRGTTQLLRFQLAPIKKLEGSLQTHFLLSSLHPRMTFPGRAGGGEAGSRPPRRPWAGILILQLPSTRGGRRSGHGAVRSWGPWKVVAEQPVGGTDPPAHGGRGRPSPNENT</sequence>
<keyword id="KW-1185">Reference proteome</keyword>